<keyword id="KW-0067">ATP-binding</keyword>
<keyword id="KW-0963">Cytoplasm</keyword>
<keyword id="KW-0227">DNA damage</keyword>
<keyword id="KW-0233">DNA recombination</keyword>
<keyword id="KW-0234">DNA repair</keyword>
<keyword id="KW-0238">DNA-binding</keyword>
<keyword id="KW-0547">Nucleotide-binding</keyword>
<keyword id="KW-0742">SOS response</keyword>
<reference key="1">
    <citation type="journal article" date="2008" name="J. Bacteriol.">
        <title>Insights into the environmental resistance gene pool from the genome sequence of the multidrug-resistant environmental isolate Escherichia coli SMS-3-5.</title>
        <authorList>
            <person name="Fricke W.F."/>
            <person name="Wright M.S."/>
            <person name="Lindell A.H."/>
            <person name="Harkins D.M."/>
            <person name="Baker-Austin C."/>
            <person name="Ravel J."/>
            <person name="Stepanauskas R."/>
        </authorList>
    </citation>
    <scope>NUCLEOTIDE SEQUENCE [LARGE SCALE GENOMIC DNA]</scope>
    <source>
        <strain>SMS-3-5 / SECEC</strain>
    </source>
</reference>
<accession>B1LQ17</accession>
<sequence>MAIDENKQKALAAALGQIEKQFGKGSIMRLGEDRSMDVETISTGSLSLDIALGAGGLPMGRIVEIYGPESSGKTTLTLQVIAAAQREGKTCAFIDAEHALDPIYARKLGVDIDNLLCSQPDTGEQALEICDALARSGAVDVIVVDSVAALTPKAEIEGEIGDSHMGLAARMMSQAMRKLAGNLKQSNTLLIFINQIRMKIGVMFGNPETTTGGNALKFYASVRLDIRRIGAVKEGENVVGSETRVKVVKNKIAAPFKQAEFQILYGEGINFYGELVDLGVKEKLIEKAGAWYSYKGEKIGQGKANATAWLKDNPETAKEIEKKVRELLLSNPNSTPDFSVDDSEGVAETNEDF</sequence>
<name>RECA_ECOSM</name>
<dbReference type="EMBL" id="CP000970">
    <property type="protein sequence ID" value="ACB19115.1"/>
    <property type="molecule type" value="Genomic_DNA"/>
</dbReference>
<dbReference type="RefSeq" id="WP_000963143.1">
    <property type="nucleotide sequence ID" value="NC_010498.1"/>
</dbReference>
<dbReference type="SMR" id="B1LQ17"/>
<dbReference type="GeneID" id="93779312"/>
<dbReference type="KEGG" id="ecm:EcSMS35_2822"/>
<dbReference type="HOGENOM" id="CLU_040469_3_2_6"/>
<dbReference type="Proteomes" id="UP000007011">
    <property type="component" value="Chromosome"/>
</dbReference>
<dbReference type="GO" id="GO:0005829">
    <property type="term" value="C:cytosol"/>
    <property type="evidence" value="ECO:0007669"/>
    <property type="project" value="TreeGrafter"/>
</dbReference>
<dbReference type="GO" id="GO:0005524">
    <property type="term" value="F:ATP binding"/>
    <property type="evidence" value="ECO:0007669"/>
    <property type="project" value="UniProtKB-UniRule"/>
</dbReference>
<dbReference type="GO" id="GO:0016887">
    <property type="term" value="F:ATP hydrolysis activity"/>
    <property type="evidence" value="ECO:0007669"/>
    <property type="project" value="InterPro"/>
</dbReference>
<dbReference type="GO" id="GO:0140664">
    <property type="term" value="F:ATP-dependent DNA damage sensor activity"/>
    <property type="evidence" value="ECO:0007669"/>
    <property type="project" value="InterPro"/>
</dbReference>
<dbReference type="GO" id="GO:0003684">
    <property type="term" value="F:damaged DNA binding"/>
    <property type="evidence" value="ECO:0007669"/>
    <property type="project" value="UniProtKB-UniRule"/>
</dbReference>
<dbReference type="GO" id="GO:0003697">
    <property type="term" value="F:single-stranded DNA binding"/>
    <property type="evidence" value="ECO:0007669"/>
    <property type="project" value="UniProtKB-UniRule"/>
</dbReference>
<dbReference type="GO" id="GO:0006310">
    <property type="term" value="P:DNA recombination"/>
    <property type="evidence" value="ECO:0007669"/>
    <property type="project" value="UniProtKB-UniRule"/>
</dbReference>
<dbReference type="GO" id="GO:0006281">
    <property type="term" value="P:DNA repair"/>
    <property type="evidence" value="ECO:0007669"/>
    <property type="project" value="UniProtKB-UniRule"/>
</dbReference>
<dbReference type="GO" id="GO:0009432">
    <property type="term" value="P:SOS response"/>
    <property type="evidence" value="ECO:0007669"/>
    <property type="project" value="UniProtKB-UniRule"/>
</dbReference>
<dbReference type="CDD" id="cd00983">
    <property type="entry name" value="RecA"/>
    <property type="match status" value="1"/>
</dbReference>
<dbReference type="FunFam" id="3.40.50.300:FF:000087">
    <property type="entry name" value="Recombinase RecA"/>
    <property type="match status" value="1"/>
</dbReference>
<dbReference type="Gene3D" id="3.40.50.300">
    <property type="entry name" value="P-loop containing nucleotide triphosphate hydrolases"/>
    <property type="match status" value="1"/>
</dbReference>
<dbReference type="HAMAP" id="MF_00268">
    <property type="entry name" value="RecA"/>
    <property type="match status" value="1"/>
</dbReference>
<dbReference type="InterPro" id="IPR003593">
    <property type="entry name" value="AAA+_ATPase"/>
</dbReference>
<dbReference type="InterPro" id="IPR013765">
    <property type="entry name" value="DNA_recomb/repair_RecA"/>
</dbReference>
<dbReference type="InterPro" id="IPR020584">
    <property type="entry name" value="DNA_recomb/repair_RecA_CS"/>
</dbReference>
<dbReference type="InterPro" id="IPR027417">
    <property type="entry name" value="P-loop_NTPase"/>
</dbReference>
<dbReference type="InterPro" id="IPR049261">
    <property type="entry name" value="RecA-like_C"/>
</dbReference>
<dbReference type="InterPro" id="IPR049428">
    <property type="entry name" value="RecA-like_N"/>
</dbReference>
<dbReference type="InterPro" id="IPR020588">
    <property type="entry name" value="RecA_ATP-bd"/>
</dbReference>
<dbReference type="InterPro" id="IPR023400">
    <property type="entry name" value="RecA_C_sf"/>
</dbReference>
<dbReference type="InterPro" id="IPR020587">
    <property type="entry name" value="RecA_monomer-monomer_interface"/>
</dbReference>
<dbReference type="NCBIfam" id="TIGR02012">
    <property type="entry name" value="tigrfam_recA"/>
    <property type="match status" value="1"/>
</dbReference>
<dbReference type="PANTHER" id="PTHR45900:SF1">
    <property type="entry name" value="MITOCHONDRIAL DNA REPAIR PROTEIN RECA HOMOLOG-RELATED"/>
    <property type="match status" value="1"/>
</dbReference>
<dbReference type="PANTHER" id="PTHR45900">
    <property type="entry name" value="RECA"/>
    <property type="match status" value="1"/>
</dbReference>
<dbReference type="Pfam" id="PF00154">
    <property type="entry name" value="RecA"/>
    <property type="match status" value="1"/>
</dbReference>
<dbReference type="Pfam" id="PF21096">
    <property type="entry name" value="RecA_C"/>
    <property type="match status" value="1"/>
</dbReference>
<dbReference type="PRINTS" id="PR00142">
    <property type="entry name" value="RECA"/>
</dbReference>
<dbReference type="SMART" id="SM00382">
    <property type="entry name" value="AAA"/>
    <property type="match status" value="1"/>
</dbReference>
<dbReference type="SUPFAM" id="SSF52540">
    <property type="entry name" value="P-loop containing nucleoside triphosphate hydrolases"/>
    <property type="match status" value="1"/>
</dbReference>
<dbReference type="SUPFAM" id="SSF54752">
    <property type="entry name" value="RecA protein, C-terminal domain"/>
    <property type="match status" value="1"/>
</dbReference>
<dbReference type="PROSITE" id="PS00321">
    <property type="entry name" value="RECA_1"/>
    <property type="match status" value="1"/>
</dbReference>
<dbReference type="PROSITE" id="PS50162">
    <property type="entry name" value="RECA_2"/>
    <property type="match status" value="1"/>
</dbReference>
<dbReference type="PROSITE" id="PS50163">
    <property type="entry name" value="RECA_3"/>
    <property type="match status" value="1"/>
</dbReference>
<organism>
    <name type="scientific">Escherichia coli (strain SMS-3-5 / SECEC)</name>
    <dbReference type="NCBI Taxonomy" id="439855"/>
    <lineage>
        <taxon>Bacteria</taxon>
        <taxon>Pseudomonadati</taxon>
        <taxon>Pseudomonadota</taxon>
        <taxon>Gammaproteobacteria</taxon>
        <taxon>Enterobacterales</taxon>
        <taxon>Enterobacteriaceae</taxon>
        <taxon>Escherichia</taxon>
    </lineage>
</organism>
<evidence type="ECO:0000255" key="1">
    <source>
        <dbReference type="HAMAP-Rule" id="MF_00268"/>
    </source>
</evidence>
<evidence type="ECO:0000256" key="2">
    <source>
        <dbReference type="SAM" id="MobiDB-lite"/>
    </source>
</evidence>
<proteinExistence type="inferred from homology"/>
<gene>
    <name evidence="1" type="primary">recA</name>
    <name type="ordered locus">EcSMS35_2822</name>
</gene>
<feature type="chain" id="PRO_1000193307" description="Protein RecA">
    <location>
        <begin position="1"/>
        <end position="353"/>
    </location>
</feature>
<feature type="region of interest" description="Disordered" evidence="2">
    <location>
        <begin position="330"/>
        <end position="353"/>
    </location>
</feature>
<feature type="compositionally biased region" description="Acidic residues" evidence="2">
    <location>
        <begin position="339"/>
        <end position="353"/>
    </location>
</feature>
<feature type="binding site" evidence="1">
    <location>
        <begin position="67"/>
        <end position="74"/>
    </location>
    <ligand>
        <name>ATP</name>
        <dbReference type="ChEBI" id="CHEBI:30616"/>
    </ligand>
</feature>
<comment type="function">
    <text evidence="1">Can catalyze the hydrolysis of ATP in the presence of single-stranded DNA, the ATP-dependent uptake of single-stranded DNA by duplex DNA, and the ATP-dependent hybridization of homologous single-stranded DNAs. It interacts with LexA causing its activation and leading to its autocatalytic cleavage.</text>
</comment>
<comment type="subcellular location">
    <subcellularLocation>
        <location evidence="1">Cytoplasm</location>
    </subcellularLocation>
</comment>
<comment type="similarity">
    <text evidence="1">Belongs to the RecA family.</text>
</comment>
<protein>
    <recommendedName>
        <fullName evidence="1">Protein RecA</fullName>
    </recommendedName>
    <alternativeName>
        <fullName evidence="1">Recombinase A</fullName>
    </alternativeName>
</protein>